<keyword id="KW-0007">Acetylation</keyword>
<keyword id="KW-0963">Cytoplasm</keyword>
<keyword id="KW-0342">GTP-binding</keyword>
<keyword id="KW-0547">Nucleotide-binding</keyword>
<keyword id="KW-0539">Nucleus</keyword>
<keyword id="KW-0597">Phosphoprotein</keyword>
<keyword id="KW-1185">Reference proteome</keyword>
<reference key="1">
    <citation type="submission" date="2006-09" db="EMBL/GenBank/DDBJ databases">
        <authorList>
            <consortium name="NIH - Mammalian Gene Collection (MGC) project"/>
        </authorList>
    </citation>
    <scope>NUCLEOTIDE SEQUENCE [LARGE SCALE MRNA]</scope>
    <source>
        <strain>Hereford</strain>
        <tissue>Basal ganglia</tissue>
    </source>
</reference>
<feature type="chain" id="PRO_0000274222" description="Rab-like protein 6">
    <location>
        <begin position="1"/>
        <end position="701"/>
    </location>
</feature>
<feature type="region of interest" description="Small GTPase-like">
    <location>
        <begin position="39"/>
        <end position="279"/>
    </location>
</feature>
<feature type="region of interest" description="Disordered" evidence="5">
    <location>
        <begin position="279"/>
        <end position="701"/>
    </location>
</feature>
<feature type="region of interest" description="Interaction with CDKN2A" evidence="1">
    <location>
        <begin position="629"/>
        <end position="667"/>
    </location>
</feature>
<feature type="compositionally biased region" description="Low complexity" evidence="5">
    <location>
        <begin position="284"/>
        <end position="315"/>
    </location>
</feature>
<feature type="compositionally biased region" description="Pro residues" evidence="5">
    <location>
        <begin position="316"/>
        <end position="344"/>
    </location>
</feature>
<feature type="compositionally biased region" description="Low complexity" evidence="5">
    <location>
        <begin position="495"/>
        <end position="506"/>
    </location>
</feature>
<feature type="compositionally biased region" description="Basic and acidic residues" evidence="5">
    <location>
        <begin position="555"/>
        <end position="569"/>
    </location>
</feature>
<feature type="compositionally biased region" description="Pro residues" evidence="5">
    <location>
        <begin position="580"/>
        <end position="589"/>
    </location>
</feature>
<feature type="compositionally biased region" description="Basic and acidic residues" evidence="5">
    <location>
        <begin position="608"/>
        <end position="626"/>
    </location>
</feature>
<feature type="compositionally biased region" description="Basic residues" evidence="5">
    <location>
        <begin position="643"/>
        <end position="653"/>
    </location>
</feature>
<feature type="compositionally biased region" description="Basic and acidic residues" evidence="5">
    <location>
        <begin position="654"/>
        <end position="665"/>
    </location>
</feature>
<feature type="compositionally biased region" description="Gly residues" evidence="5">
    <location>
        <begin position="683"/>
        <end position="701"/>
    </location>
</feature>
<feature type="binding site" evidence="4">
    <location>
        <begin position="50"/>
        <end position="57"/>
    </location>
    <ligand>
        <name>GTP</name>
        <dbReference type="ChEBI" id="CHEBI:37565"/>
    </ligand>
</feature>
<feature type="binding site" evidence="4">
    <location>
        <begin position="100"/>
        <end position="104"/>
    </location>
    <ligand>
        <name>GTP</name>
        <dbReference type="ChEBI" id="CHEBI:37565"/>
    </ligand>
</feature>
<feature type="binding site" evidence="4">
    <location>
        <begin position="177"/>
        <end position="179"/>
    </location>
    <ligand>
        <name>GTP</name>
        <dbReference type="ChEBI" id="CHEBI:37565"/>
    </ligand>
</feature>
<feature type="modified residue" description="N-acetylmethionine" evidence="2">
    <location>
        <position position="1"/>
    </location>
</feature>
<feature type="modified residue" description="Phosphoserine" evidence="2">
    <location>
        <position position="394"/>
    </location>
</feature>
<feature type="modified residue" description="Phosphoserine" evidence="2">
    <location>
        <position position="416"/>
    </location>
</feature>
<feature type="modified residue" description="Phosphoserine" evidence="2">
    <location>
        <position position="418"/>
    </location>
</feature>
<feature type="modified residue" description="Phosphoserine" evidence="3">
    <location>
        <position position="461"/>
    </location>
</feature>
<feature type="modified residue" description="Phosphoserine" evidence="3">
    <location>
        <position position="462"/>
    </location>
</feature>
<feature type="modified residue" description="Phosphoserine" evidence="2">
    <location>
        <position position="552"/>
    </location>
</feature>
<feature type="modified residue" description="Phosphoserine" evidence="2">
    <location>
        <position position="570"/>
    </location>
</feature>
<feature type="modified residue" description="Phosphothreonine" evidence="2">
    <location>
        <position position="573"/>
    </location>
</feature>
<feature type="modified residue" description="Phosphoserine" evidence="2">
    <location>
        <position position="614"/>
    </location>
</feature>
<feature type="modified residue" description="Phosphoserine" evidence="2">
    <location>
        <position position="615"/>
    </location>
</feature>
<organism>
    <name type="scientific">Bos taurus</name>
    <name type="common">Bovine</name>
    <dbReference type="NCBI Taxonomy" id="9913"/>
    <lineage>
        <taxon>Eukaryota</taxon>
        <taxon>Metazoa</taxon>
        <taxon>Chordata</taxon>
        <taxon>Craniata</taxon>
        <taxon>Vertebrata</taxon>
        <taxon>Euteleostomi</taxon>
        <taxon>Mammalia</taxon>
        <taxon>Eutheria</taxon>
        <taxon>Laurasiatheria</taxon>
        <taxon>Artiodactyla</taxon>
        <taxon>Ruminantia</taxon>
        <taxon>Pecora</taxon>
        <taxon>Bovidae</taxon>
        <taxon>Bovinae</taxon>
        <taxon>Bos</taxon>
    </lineage>
</organism>
<name>RABL6_BOVIN</name>
<gene>
    <name type="primary">RABL6</name>
    <name type="synonym">PARF</name>
</gene>
<evidence type="ECO:0000250" key="1"/>
<evidence type="ECO:0000250" key="2">
    <source>
        <dbReference type="UniProtKB" id="Q3YEC7"/>
    </source>
</evidence>
<evidence type="ECO:0000250" key="3">
    <source>
        <dbReference type="UniProtKB" id="Q5U3K5"/>
    </source>
</evidence>
<evidence type="ECO:0000255" key="4"/>
<evidence type="ECO:0000256" key="5">
    <source>
        <dbReference type="SAM" id="MobiDB-lite"/>
    </source>
</evidence>
<evidence type="ECO:0000305" key="6"/>
<sequence>MFSALKKLVGSEQAPGRDRNIPAGLQSMNQALQRRFAKGVQYNMKIVIRGDRNTGKTALWHRLQGKKFVEEYIPTQEIQVTSIHWSYKTTDDVVKVEVWDVVDKGKCKKRGDGLKMENDPQEAESEMALDAEFLDVYKNCNGVVMMFDITKQWTFNYILRELPKVPTHVPVCVLGNYRDMGEHRVILPDDVRDVLDHLDRPPGSSYFRYAESSMKNSFGLKYLHRFFNIPFLQLQRETLLRQLETNQLDIDATLEELSVQQETEDQNYDIFLEMMEARSRGHASPLTTSGQSPSSGSQSPVVPPSTVSTGSSSPSTPQPVLQPPLQAPPAPPAPAEAPPLPAAPPRRSIIARLFGSTPATEAAPPPPEPTPAAEASQKVQNVEDFVPEDSLDGSFLEDTVPAKDEKRLGARGPQDSDSDRETQAGNPMVAGFQDDVDLEDKPPSRPLPPTGPVPSEDITLSSEEEAEEGAGHPKAAVLAPQKCPEPETRRSSTKALGPPRDAAPRAAKPRPEGPSGKLEEGTDKPVSSESDAEGPIAAQMLSFVMDDPDFESDSDAQRRAGEFPVREDLSDLTDEDAGPVQPPAPPKPLAPSFRLKDDSDLFGLGLEEPGREDSSEQDKEGRPPAKEKKKKKKKGREEEDKAAKKRSKHKKSRERADDKGRDERRRRPRGPQRTALDELEAFLGGGAPSGPLRGGGDYEAL</sequence>
<accession>Q08DA0</accession>
<comment type="function">
    <text evidence="1">May enhance cellular proliferation. May reduce growth inhibitory activity of CDKN2A (By similarity).</text>
</comment>
<comment type="subcellular location">
    <subcellularLocation>
        <location evidence="6">Nucleus</location>
    </subcellularLocation>
    <subcellularLocation>
        <location evidence="2">Cytoplasm</location>
    </subcellularLocation>
    <text evidence="2">Predominantly cytoplasmic.</text>
</comment>
<comment type="similarity">
    <text evidence="6">Belongs to the small GTPase superfamily. Rab family.</text>
</comment>
<protein>
    <recommendedName>
        <fullName>Rab-like protein 6</fullName>
    </recommendedName>
    <alternativeName>
        <fullName>GTP-binding protein Parf</fullName>
    </alternativeName>
    <alternativeName>
        <fullName>Rab-like protein 1</fullName>
        <shortName>RBEL1</shortName>
    </alternativeName>
</protein>
<proteinExistence type="evidence at transcript level"/>
<dbReference type="EMBL" id="BC123865">
    <property type="protein sequence ID" value="AAI23866.1"/>
    <property type="molecule type" value="mRNA"/>
</dbReference>
<dbReference type="RefSeq" id="NP_001070285.1">
    <property type="nucleotide sequence ID" value="NM_001076817.1"/>
</dbReference>
<dbReference type="SMR" id="Q08DA0"/>
<dbReference type="FunCoup" id="Q08DA0">
    <property type="interactions" value="2456"/>
</dbReference>
<dbReference type="STRING" id="9913.ENSBTAP00000001237"/>
<dbReference type="PaxDb" id="9913-ENSBTAP00000001237"/>
<dbReference type="GeneID" id="508218"/>
<dbReference type="KEGG" id="bta:508218"/>
<dbReference type="CTD" id="55684"/>
<dbReference type="VEuPathDB" id="HostDB:ENSBTAG00000039573"/>
<dbReference type="eggNOG" id="KOG0084">
    <property type="taxonomic scope" value="Eukaryota"/>
</dbReference>
<dbReference type="HOGENOM" id="CLU_012780_1_0_1"/>
<dbReference type="InParanoid" id="Q08DA0"/>
<dbReference type="OMA" id="DHVTYFI"/>
<dbReference type="OrthoDB" id="207081at2759"/>
<dbReference type="TreeFam" id="TF313974"/>
<dbReference type="Proteomes" id="UP000009136">
    <property type="component" value="Chromosome 11"/>
</dbReference>
<dbReference type="Bgee" id="ENSBTAG00000039573">
    <property type="expression patterns" value="Expressed in retina and 103 other cell types or tissues"/>
</dbReference>
<dbReference type="GO" id="GO:0005829">
    <property type="term" value="C:cytosol"/>
    <property type="evidence" value="ECO:0000318"/>
    <property type="project" value="GO_Central"/>
</dbReference>
<dbReference type="GO" id="GO:0005634">
    <property type="term" value="C:nucleus"/>
    <property type="evidence" value="ECO:0000318"/>
    <property type="project" value="GO_Central"/>
</dbReference>
<dbReference type="GO" id="GO:0005525">
    <property type="term" value="F:GTP binding"/>
    <property type="evidence" value="ECO:0000318"/>
    <property type="project" value="GO_Central"/>
</dbReference>
<dbReference type="FunFam" id="3.40.50.300:FF:000781">
    <property type="entry name" value="RAB, member RAS oncogene family like 6"/>
    <property type="match status" value="1"/>
</dbReference>
<dbReference type="Gene3D" id="3.40.50.300">
    <property type="entry name" value="P-loop containing nucleotide triphosphate hydrolases"/>
    <property type="match status" value="1"/>
</dbReference>
<dbReference type="InterPro" id="IPR027417">
    <property type="entry name" value="P-loop_NTPase"/>
</dbReference>
<dbReference type="InterPro" id="IPR040385">
    <property type="entry name" value="RABL6"/>
</dbReference>
<dbReference type="PANTHER" id="PTHR14932:SF1">
    <property type="entry name" value="RAB-LIKE PROTEIN 6"/>
    <property type="match status" value="1"/>
</dbReference>
<dbReference type="PANTHER" id="PTHR14932">
    <property type="entry name" value="RAS GTPASE-RELATED"/>
    <property type="match status" value="1"/>
</dbReference>
<dbReference type="Pfam" id="PF08477">
    <property type="entry name" value="Roc"/>
    <property type="match status" value="1"/>
</dbReference>
<dbReference type="PRINTS" id="PR00449">
    <property type="entry name" value="RASTRNSFRMNG"/>
</dbReference>
<dbReference type="SMART" id="SM00175">
    <property type="entry name" value="RAB"/>
    <property type="match status" value="1"/>
</dbReference>
<dbReference type="SUPFAM" id="SSF52540">
    <property type="entry name" value="P-loop containing nucleoside triphosphate hydrolases"/>
    <property type="match status" value="1"/>
</dbReference>
<dbReference type="PROSITE" id="PS51419">
    <property type="entry name" value="RAB"/>
    <property type="match status" value="1"/>
</dbReference>